<name>RS12_COXBU</name>
<sequence length="124" mass="13753">MARINQLVRKPRRARAKKSDVPALEGCPQRRGVCTRVYTTTPKKPNSALRKVARVRITNGAEVTAYIGGEGHNLQEHSVVLIRGGRVKDLPGVRYHIVRGSLDTAGVSGRRRGRSKYGEKKPKE</sequence>
<organism>
    <name type="scientific">Coxiella burnetii (strain RSA 493 / Nine Mile phase I)</name>
    <dbReference type="NCBI Taxonomy" id="227377"/>
    <lineage>
        <taxon>Bacteria</taxon>
        <taxon>Pseudomonadati</taxon>
        <taxon>Pseudomonadota</taxon>
        <taxon>Gammaproteobacteria</taxon>
        <taxon>Legionellales</taxon>
        <taxon>Coxiellaceae</taxon>
        <taxon>Coxiella</taxon>
    </lineage>
</organism>
<accession>Q83ES9</accession>
<feature type="chain" id="PRO_0000146215" description="Small ribosomal subunit protein uS12">
    <location>
        <begin position="1"/>
        <end position="124"/>
    </location>
</feature>
<feature type="region of interest" description="Disordered" evidence="2">
    <location>
        <begin position="1"/>
        <end position="25"/>
    </location>
</feature>
<feature type="region of interest" description="Disordered" evidence="2">
    <location>
        <begin position="103"/>
        <end position="124"/>
    </location>
</feature>
<reference key="1">
    <citation type="journal article" date="2003" name="Proc. Natl. Acad. Sci. U.S.A.">
        <title>Complete genome sequence of the Q-fever pathogen, Coxiella burnetii.</title>
        <authorList>
            <person name="Seshadri R."/>
            <person name="Paulsen I.T."/>
            <person name="Eisen J.A."/>
            <person name="Read T.D."/>
            <person name="Nelson K.E."/>
            <person name="Nelson W.C."/>
            <person name="Ward N.L."/>
            <person name="Tettelin H."/>
            <person name="Davidsen T.M."/>
            <person name="Beanan M.J."/>
            <person name="DeBoy R.T."/>
            <person name="Daugherty S.C."/>
            <person name="Brinkac L.M."/>
            <person name="Madupu R."/>
            <person name="Dodson R.J."/>
            <person name="Khouri H.M."/>
            <person name="Lee K.H."/>
            <person name="Carty H.A."/>
            <person name="Scanlan D."/>
            <person name="Heinzen R.A."/>
            <person name="Thompson H.A."/>
            <person name="Samuel J.E."/>
            <person name="Fraser C.M."/>
            <person name="Heidelberg J.F."/>
        </authorList>
    </citation>
    <scope>NUCLEOTIDE SEQUENCE [LARGE SCALE GENOMIC DNA]</scope>
    <source>
        <strain>RSA 493 / Nine Mile phase I</strain>
    </source>
</reference>
<evidence type="ECO:0000255" key="1">
    <source>
        <dbReference type="HAMAP-Rule" id="MF_00403"/>
    </source>
</evidence>
<evidence type="ECO:0000256" key="2">
    <source>
        <dbReference type="SAM" id="MobiDB-lite"/>
    </source>
</evidence>
<evidence type="ECO:0000305" key="3"/>
<gene>
    <name evidence="1" type="primary">rpsL</name>
    <name type="ordered locus">CBU_0233</name>
</gene>
<dbReference type="EMBL" id="AE016828">
    <property type="protein sequence ID" value="AAO89791.2"/>
    <property type="status" value="ALT_INIT"/>
    <property type="molecule type" value="Genomic_DNA"/>
</dbReference>
<dbReference type="RefSeq" id="NP_819277.3">
    <property type="nucleotide sequence ID" value="NC_002971.4"/>
</dbReference>
<dbReference type="RefSeq" id="WP_005771621.1">
    <property type="nucleotide sequence ID" value="NZ_CCYB01000061.1"/>
</dbReference>
<dbReference type="SMR" id="Q83ES9"/>
<dbReference type="STRING" id="227377.CBU_0233"/>
<dbReference type="EnsemblBacteria" id="AAO89791">
    <property type="protein sequence ID" value="AAO89791"/>
    <property type="gene ID" value="CBU_0233"/>
</dbReference>
<dbReference type="GeneID" id="1208114"/>
<dbReference type="KEGG" id="cbu:CBU_0233"/>
<dbReference type="PATRIC" id="fig|227377.7.peg.228"/>
<dbReference type="eggNOG" id="COG0048">
    <property type="taxonomic scope" value="Bacteria"/>
</dbReference>
<dbReference type="HOGENOM" id="CLU_104295_1_2_6"/>
<dbReference type="OrthoDB" id="9802366at2"/>
<dbReference type="Proteomes" id="UP000002671">
    <property type="component" value="Chromosome"/>
</dbReference>
<dbReference type="GO" id="GO:0005840">
    <property type="term" value="C:ribosome"/>
    <property type="evidence" value="ECO:0000318"/>
    <property type="project" value="GO_Central"/>
</dbReference>
<dbReference type="GO" id="GO:0015935">
    <property type="term" value="C:small ribosomal subunit"/>
    <property type="evidence" value="ECO:0007669"/>
    <property type="project" value="InterPro"/>
</dbReference>
<dbReference type="GO" id="GO:0019843">
    <property type="term" value="F:rRNA binding"/>
    <property type="evidence" value="ECO:0007669"/>
    <property type="project" value="UniProtKB-UniRule"/>
</dbReference>
<dbReference type="GO" id="GO:0003735">
    <property type="term" value="F:structural constituent of ribosome"/>
    <property type="evidence" value="ECO:0000318"/>
    <property type="project" value="GO_Central"/>
</dbReference>
<dbReference type="GO" id="GO:0000049">
    <property type="term" value="F:tRNA binding"/>
    <property type="evidence" value="ECO:0007669"/>
    <property type="project" value="UniProtKB-UniRule"/>
</dbReference>
<dbReference type="GO" id="GO:0006412">
    <property type="term" value="P:translation"/>
    <property type="evidence" value="ECO:0000318"/>
    <property type="project" value="GO_Central"/>
</dbReference>
<dbReference type="CDD" id="cd03368">
    <property type="entry name" value="Ribosomal_S12"/>
    <property type="match status" value="1"/>
</dbReference>
<dbReference type="FunFam" id="2.40.50.140:FF:000001">
    <property type="entry name" value="30S ribosomal protein S12"/>
    <property type="match status" value="1"/>
</dbReference>
<dbReference type="Gene3D" id="2.40.50.140">
    <property type="entry name" value="Nucleic acid-binding proteins"/>
    <property type="match status" value="1"/>
</dbReference>
<dbReference type="HAMAP" id="MF_00403_B">
    <property type="entry name" value="Ribosomal_uS12_B"/>
    <property type="match status" value="1"/>
</dbReference>
<dbReference type="InterPro" id="IPR012340">
    <property type="entry name" value="NA-bd_OB-fold"/>
</dbReference>
<dbReference type="InterPro" id="IPR006032">
    <property type="entry name" value="Ribosomal_uS12"/>
</dbReference>
<dbReference type="InterPro" id="IPR005679">
    <property type="entry name" value="Ribosomal_uS12_bac"/>
</dbReference>
<dbReference type="NCBIfam" id="TIGR00981">
    <property type="entry name" value="rpsL_bact"/>
    <property type="match status" value="1"/>
</dbReference>
<dbReference type="PANTHER" id="PTHR11652">
    <property type="entry name" value="30S RIBOSOMAL PROTEIN S12 FAMILY MEMBER"/>
    <property type="match status" value="1"/>
</dbReference>
<dbReference type="Pfam" id="PF00164">
    <property type="entry name" value="Ribosom_S12_S23"/>
    <property type="match status" value="1"/>
</dbReference>
<dbReference type="PIRSF" id="PIRSF002133">
    <property type="entry name" value="Ribosomal_S12/S23"/>
    <property type="match status" value="1"/>
</dbReference>
<dbReference type="PRINTS" id="PR01034">
    <property type="entry name" value="RIBOSOMALS12"/>
</dbReference>
<dbReference type="SUPFAM" id="SSF50249">
    <property type="entry name" value="Nucleic acid-binding proteins"/>
    <property type="match status" value="1"/>
</dbReference>
<dbReference type="PROSITE" id="PS00055">
    <property type="entry name" value="RIBOSOMAL_S12"/>
    <property type="match status" value="1"/>
</dbReference>
<proteinExistence type="inferred from homology"/>
<protein>
    <recommendedName>
        <fullName evidence="1">Small ribosomal subunit protein uS12</fullName>
    </recommendedName>
    <alternativeName>
        <fullName evidence="3">30S ribosomal protein S12</fullName>
    </alternativeName>
</protein>
<keyword id="KW-1185">Reference proteome</keyword>
<keyword id="KW-0687">Ribonucleoprotein</keyword>
<keyword id="KW-0689">Ribosomal protein</keyword>
<keyword id="KW-0694">RNA-binding</keyword>
<keyword id="KW-0699">rRNA-binding</keyword>
<keyword id="KW-0820">tRNA-binding</keyword>
<comment type="function">
    <text evidence="1">With S4 and S5 plays an important role in translational accuracy.</text>
</comment>
<comment type="function">
    <text evidence="1">Interacts with and stabilizes bases of the 16S rRNA that are involved in tRNA selection in the A site and with the mRNA backbone. Located at the interface of the 30S and 50S subunits, it traverses the body of the 30S subunit contacting proteins on the other side and probably holding the rRNA structure together. The combined cluster of proteins S8, S12 and S17 appears to hold together the shoulder and platform of the 30S subunit.</text>
</comment>
<comment type="subunit">
    <text evidence="1">Part of the 30S ribosomal subunit. Contacts proteins S8 and S17. May interact with IF1 in the 30S initiation complex.</text>
</comment>
<comment type="similarity">
    <text evidence="1">Belongs to the universal ribosomal protein uS12 family.</text>
</comment>
<comment type="caution">
    <text evidence="3">Because the enzyme that would modify Asp-89 to 3-methylthioaspartic acid has not been found in the proteome of this organism, that modification is not predicted.</text>
</comment>
<comment type="sequence caution" evidence="3">
    <conflict type="erroneous initiation">
        <sequence resource="EMBL-CDS" id="AAO89791"/>
    </conflict>
</comment>